<organism>
    <name type="scientific">Chromohalobacter salexigens (strain ATCC BAA-138 / DSM 3043 / CIP 106854 / NCIMB 13768 / 1H11)</name>
    <dbReference type="NCBI Taxonomy" id="290398"/>
    <lineage>
        <taxon>Bacteria</taxon>
        <taxon>Pseudomonadati</taxon>
        <taxon>Pseudomonadota</taxon>
        <taxon>Gammaproteobacteria</taxon>
        <taxon>Oceanospirillales</taxon>
        <taxon>Halomonadaceae</taxon>
        <taxon>Chromohalobacter</taxon>
    </lineage>
</organism>
<comment type="similarity">
    <text evidence="1">Belongs to the bacterial ribosomal protein bS21 family.</text>
</comment>
<feature type="chain" id="PRO_0000266655" description="Small ribosomal subunit protein bS21">
    <location>
        <begin position="1"/>
        <end position="71"/>
    </location>
</feature>
<accession>Q1QYX7</accession>
<sequence>MPSVKVRDNEPFDVALRRFKRSCEKAGVLSEVRRRETYEKPTAVRKRKAAAAVKRHAKKLQRERKRFERLY</sequence>
<reference key="1">
    <citation type="journal article" date="2011" name="Stand. Genomic Sci.">
        <title>Complete genome sequence of the halophilic and highly halotolerant Chromohalobacter salexigens type strain (1H11(T)).</title>
        <authorList>
            <person name="Copeland A."/>
            <person name="O'Connor K."/>
            <person name="Lucas S."/>
            <person name="Lapidus A."/>
            <person name="Berry K.W."/>
            <person name="Detter J.C."/>
            <person name="Del Rio T.G."/>
            <person name="Hammon N."/>
            <person name="Dalin E."/>
            <person name="Tice H."/>
            <person name="Pitluck S."/>
            <person name="Bruce D."/>
            <person name="Goodwin L."/>
            <person name="Han C."/>
            <person name="Tapia R."/>
            <person name="Saunders E."/>
            <person name="Schmutz J."/>
            <person name="Brettin T."/>
            <person name="Larimer F."/>
            <person name="Land M."/>
            <person name="Hauser L."/>
            <person name="Vargas C."/>
            <person name="Nieto J.J."/>
            <person name="Kyrpides N.C."/>
            <person name="Ivanova N."/>
            <person name="Goker M."/>
            <person name="Klenk H.P."/>
            <person name="Csonka L.N."/>
            <person name="Woyke T."/>
        </authorList>
    </citation>
    <scope>NUCLEOTIDE SEQUENCE [LARGE SCALE GENOMIC DNA]</scope>
    <source>
        <strain>ATCC BAA-138 / DSM 3043 / CIP 106854 / NCIMB 13768 / 1H11</strain>
    </source>
</reference>
<dbReference type="EMBL" id="CP000285">
    <property type="protein sequence ID" value="ABE58331.1"/>
    <property type="molecule type" value="Genomic_DNA"/>
</dbReference>
<dbReference type="RefSeq" id="WP_011506277.1">
    <property type="nucleotide sequence ID" value="NC_007963.1"/>
</dbReference>
<dbReference type="SMR" id="Q1QYX7"/>
<dbReference type="STRING" id="290398.Csal_0974"/>
<dbReference type="GeneID" id="95333729"/>
<dbReference type="KEGG" id="csa:Csal_0974"/>
<dbReference type="eggNOG" id="COG0828">
    <property type="taxonomic scope" value="Bacteria"/>
</dbReference>
<dbReference type="HOGENOM" id="CLU_159258_1_0_6"/>
<dbReference type="OrthoDB" id="9799244at2"/>
<dbReference type="Proteomes" id="UP000000239">
    <property type="component" value="Chromosome"/>
</dbReference>
<dbReference type="GO" id="GO:1990904">
    <property type="term" value="C:ribonucleoprotein complex"/>
    <property type="evidence" value="ECO:0007669"/>
    <property type="project" value="UniProtKB-KW"/>
</dbReference>
<dbReference type="GO" id="GO:0005840">
    <property type="term" value="C:ribosome"/>
    <property type="evidence" value="ECO:0007669"/>
    <property type="project" value="UniProtKB-KW"/>
</dbReference>
<dbReference type="GO" id="GO:0003735">
    <property type="term" value="F:structural constituent of ribosome"/>
    <property type="evidence" value="ECO:0007669"/>
    <property type="project" value="InterPro"/>
</dbReference>
<dbReference type="GO" id="GO:0006412">
    <property type="term" value="P:translation"/>
    <property type="evidence" value="ECO:0007669"/>
    <property type="project" value="UniProtKB-UniRule"/>
</dbReference>
<dbReference type="Gene3D" id="1.20.5.1150">
    <property type="entry name" value="Ribosomal protein S8"/>
    <property type="match status" value="1"/>
</dbReference>
<dbReference type="HAMAP" id="MF_00358">
    <property type="entry name" value="Ribosomal_bS21"/>
    <property type="match status" value="1"/>
</dbReference>
<dbReference type="InterPro" id="IPR001911">
    <property type="entry name" value="Ribosomal_bS21"/>
</dbReference>
<dbReference type="InterPro" id="IPR018278">
    <property type="entry name" value="Ribosomal_bS21_CS"/>
</dbReference>
<dbReference type="InterPro" id="IPR038380">
    <property type="entry name" value="Ribosomal_bS21_sf"/>
</dbReference>
<dbReference type="NCBIfam" id="TIGR00030">
    <property type="entry name" value="S21p"/>
    <property type="match status" value="1"/>
</dbReference>
<dbReference type="PANTHER" id="PTHR21109">
    <property type="entry name" value="MITOCHONDRIAL 28S RIBOSOMAL PROTEIN S21"/>
    <property type="match status" value="1"/>
</dbReference>
<dbReference type="PANTHER" id="PTHR21109:SF22">
    <property type="entry name" value="SMALL RIBOSOMAL SUBUNIT PROTEIN BS21"/>
    <property type="match status" value="1"/>
</dbReference>
<dbReference type="Pfam" id="PF01165">
    <property type="entry name" value="Ribosomal_S21"/>
    <property type="match status" value="1"/>
</dbReference>
<dbReference type="PRINTS" id="PR00976">
    <property type="entry name" value="RIBOSOMALS21"/>
</dbReference>
<dbReference type="PROSITE" id="PS01181">
    <property type="entry name" value="RIBOSOMAL_S21"/>
    <property type="match status" value="1"/>
</dbReference>
<keyword id="KW-1185">Reference proteome</keyword>
<keyword id="KW-0687">Ribonucleoprotein</keyword>
<keyword id="KW-0689">Ribosomal protein</keyword>
<evidence type="ECO:0000255" key="1">
    <source>
        <dbReference type="HAMAP-Rule" id="MF_00358"/>
    </source>
</evidence>
<evidence type="ECO:0000305" key="2"/>
<protein>
    <recommendedName>
        <fullName evidence="1">Small ribosomal subunit protein bS21</fullName>
    </recommendedName>
    <alternativeName>
        <fullName evidence="2">30S ribosomal protein S21</fullName>
    </alternativeName>
</protein>
<name>RS21_CHRSD</name>
<gene>
    <name evidence="1" type="primary">rpsU</name>
    <name type="ordered locus">Csal_0974</name>
</gene>
<proteinExistence type="inferred from homology"/>